<comment type="function">
    <text evidence="4">Possesses sialyltransferase-like activity in vitro. Transfers sialic acid to the oligosaccharide Gal-beta-1,3-GalNAc and to glycoproteins such as asialofetuin, alpha-1-acid glycoprotein (NeuAc-alpha-2,3-Gal-beta-1,3-GalNAc-) and andasialo-alpha-1-acid glycoprotein. The transferred sialic acid is linked to galactose of Gal-beta-1,3-GalNAc through alpha-2,6-linkage.</text>
</comment>
<comment type="subcellular location">
    <subcellularLocation>
        <location evidence="1">Golgi apparatus membrane</location>
        <topology evidence="6">Single-pass type II membrane protein</topology>
    </subcellularLocation>
</comment>
<comment type="tissue specificity">
    <text evidence="4">Expressed in leaves and stalks. Expressed at low levels in roots.</text>
</comment>
<comment type="similarity">
    <text evidence="6">Belongs to the glycosyltransferase 29 family.</text>
</comment>
<dbReference type="EC" id="2.4.99.-" evidence="6"/>
<dbReference type="EMBL" id="AP003289">
    <property type="protein sequence ID" value="BAB63715.1"/>
    <property type="molecule type" value="Genomic_DNA"/>
</dbReference>
<dbReference type="EMBL" id="AP003794">
    <property type="protein sequence ID" value="BAB90552.1"/>
    <property type="molecule type" value="Genomic_DNA"/>
</dbReference>
<dbReference type="EMBL" id="AP008207">
    <property type="protein sequence ID" value="BAF06777.1"/>
    <property type="molecule type" value="Genomic_DNA"/>
</dbReference>
<dbReference type="EMBL" id="AP014957">
    <property type="protein sequence ID" value="BAS75321.1"/>
    <property type="molecule type" value="Genomic_DNA"/>
</dbReference>
<dbReference type="EMBL" id="CM000138">
    <property type="protein sequence ID" value="EAZ14214.1"/>
    <property type="molecule type" value="Genomic_DNA"/>
</dbReference>
<dbReference type="EMBL" id="AK107493">
    <property type="status" value="NOT_ANNOTATED_CDS"/>
    <property type="molecule type" value="mRNA"/>
</dbReference>
<dbReference type="RefSeq" id="XP_015621154.1">
    <property type="nucleotide sequence ID" value="XM_015765668.1"/>
</dbReference>
<dbReference type="SMR" id="Q94DD4"/>
<dbReference type="FunCoup" id="Q94DD4">
    <property type="interactions" value="337"/>
</dbReference>
<dbReference type="STRING" id="39947.Q94DD4"/>
<dbReference type="CAZy" id="GT29">
    <property type="family name" value="Glycosyltransferase Family 29"/>
</dbReference>
<dbReference type="GlyCosmos" id="Q94DD4">
    <property type="glycosylation" value="3 sites, No reported glycans"/>
</dbReference>
<dbReference type="PaxDb" id="39947-Q94DD4"/>
<dbReference type="EnsemblPlants" id="Os01t0858900-01">
    <property type="protein sequence ID" value="Os01t0858900-01"/>
    <property type="gene ID" value="Os01g0858900"/>
</dbReference>
<dbReference type="Gramene" id="Os01t0858900-01">
    <property type="protein sequence ID" value="Os01t0858900-01"/>
    <property type="gene ID" value="Os01g0858900"/>
</dbReference>
<dbReference type="KEGG" id="dosa:Os01g0858900"/>
<dbReference type="eggNOG" id="KOG2692">
    <property type="taxonomic scope" value="Eukaryota"/>
</dbReference>
<dbReference type="HOGENOM" id="CLU_044787_1_0_1"/>
<dbReference type="InParanoid" id="Q94DD4"/>
<dbReference type="OMA" id="RERCNCH"/>
<dbReference type="OrthoDB" id="10264956at2759"/>
<dbReference type="Proteomes" id="UP000000763">
    <property type="component" value="Chromosome 1"/>
</dbReference>
<dbReference type="Proteomes" id="UP000007752">
    <property type="component" value="Chromosome 1"/>
</dbReference>
<dbReference type="Proteomes" id="UP000059680">
    <property type="component" value="Chromosome 1"/>
</dbReference>
<dbReference type="GO" id="GO:0000139">
    <property type="term" value="C:Golgi membrane"/>
    <property type="evidence" value="ECO:0007669"/>
    <property type="project" value="UniProtKB-SubCell"/>
</dbReference>
<dbReference type="GO" id="GO:0008373">
    <property type="term" value="F:sialyltransferase activity"/>
    <property type="evidence" value="ECO:0000314"/>
    <property type="project" value="UniProtKB"/>
</dbReference>
<dbReference type="GO" id="GO:0006486">
    <property type="term" value="P:protein glycosylation"/>
    <property type="evidence" value="ECO:0007669"/>
    <property type="project" value="InterPro"/>
</dbReference>
<dbReference type="CDD" id="cd19952">
    <property type="entry name" value="GT29"/>
    <property type="match status" value="1"/>
</dbReference>
<dbReference type="FunFam" id="3.90.1480.20:FF:000016">
    <property type="entry name" value="Sialyltransferase-like protein 3"/>
    <property type="match status" value="1"/>
</dbReference>
<dbReference type="Gene3D" id="3.90.1480.20">
    <property type="entry name" value="Glycosyl transferase family 29"/>
    <property type="match status" value="1"/>
</dbReference>
<dbReference type="InterPro" id="IPR001675">
    <property type="entry name" value="Glyco_trans_29"/>
</dbReference>
<dbReference type="InterPro" id="IPR038578">
    <property type="entry name" value="GT29-like_sf"/>
</dbReference>
<dbReference type="PANTHER" id="PTHR46779">
    <property type="entry name" value="BETA-1,6-GALACTOSYLTRANSFERASE GALT29A"/>
    <property type="match status" value="1"/>
</dbReference>
<dbReference type="PANTHER" id="PTHR46779:SF1">
    <property type="entry name" value="BETA-1,6-GALACTOSYLTRANSFERASE GALT29A"/>
    <property type="match status" value="1"/>
</dbReference>
<dbReference type="Pfam" id="PF00777">
    <property type="entry name" value="Glyco_transf_29"/>
    <property type="match status" value="1"/>
</dbReference>
<keyword id="KW-0325">Glycoprotein</keyword>
<keyword id="KW-0328">Glycosyltransferase</keyword>
<keyword id="KW-0333">Golgi apparatus</keyword>
<keyword id="KW-0472">Membrane</keyword>
<keyword id="KW-1185">Reference proteome</keyword>
<keyword id="KW-0735">Signal-anchor</keyword>
<keyword id="KW-0808">Transferase</keyword>
<keyword id="KW-0812">Transmembrane</keyword>
<keyword id="KW-1133">Transmembrane helix</keyword>
<accession>Q94DD4</accession>
<accession>A0A0N7KE36</accession>
<evidence type="ECO:0000250" key="1">
    <source>
        <dbReference type="UniProtKB" id="Q9SGD2"/>
    </source>
</evidence>
<evidence type="ECO:0000255" key="2"/>
<evidence type="ECO:0000255" key="3">
    <source>
        <dbReference type="PROSITE-ProRule" id="PRU00498"/>
    </source>
</evidence>
<evidence type="ECO:0000269" key="4">
    <source>
    </source>
</evidence>
<evidence type="ECO:0000303" key="5">
    <source>
    </source>
</evidence>
<evidence type="ECO:0000305" key="6"/>
<evidence type="ECO:0000312" key="7">
    <source>
        <dbReference type="EMBL" id="BAB63715.1"/>
    </source>
</evidence>
<evidence type="ECO:0000312" key="8">
    <source>
        <dbReference type="EMBL" id="BAB90552.1"/>
    </source>
</evidence>
<evidence type="ECO:0000312" key="9">
    <source>
        <dbReference type="EMBL" id="BAF06777.1"/>
    </source>
</evidence>
<evidence type="ECO:0000312" key="10">
    <source>
        <dbReference type="EMBL" id="EAZ14214.1"/>
    </source>
</evidence>
<sequence>MKRPLRRPFAVLLFVVLCAAASFPSVLRRSVGPAPVLAPLPPLDPARLNATLLRLAAADPSEAPLRRDVDDLLEGRLPASSARARAWRLRGDRLHLHLRHHQFPVYRRGHHPDHDHDPLLHPLPRQELHLDPSLRRALRSWHRLRRHDPGVLRNLPSLLSLPGRIPSCAVVGNSGILLGASHGALIDSHAAVFRLNNARISGFAANVGAKTNLSFINSNVLHLCARRPNCFCHPYGDGVPILLYICQAAHFLDVASCNASSRSLHAASISVTDPRLDVLCARIVKYYSLRRFVAETGRAAEEWSSTRDAAMFHYSSGMQAIMVAVGVCDRVSVFGFGKAADAKHHYHSNQKAELDLHDYKAEYAFYRDLADRPEVVPFLNDAGIAVPPVVFYH</sequence>
<proteinExistence type="evidence at transcript level"/>
<feature type="chain" id="PRO_0000434312" description="Sialyltransferase-like protein 1">
    <location>
        <begin position="1"/>
        <end position="393"/>
    </location>
</feature>
<feature type="topological domain" description="Cytoplasmic" evidence="6">
    <location>
        <begin position="1"/>
        <end position="8"/>
    </location>
</feature>
<feature type="transmembrane region" description="Helical; Signal-anchor for type II membrane protein" evidence="2">
    <location>
        <begin position="9"/>
        <end position="27"/>
    </location>
</feature>
<feature type="topological domain" description="Lumenal" evidence="6">
    <location>
        <begin position="28"/>
        <end position="393"/>
    </location>
</feature>
<feature type="glycosylation site" description="N-linked (GlcNAc...) asparagine" evidence="3">
    <location>
        <position position="49"/>
    </location>
</feature>
<feature type="glycosylation site" description="N-linked (GlcNAc...) asparagine" evidence="3">
    <location>
        <position position="212"/>
    </location>
</feature>
<feature type="glycosylation site" description="N-linked (GlcNAc...) asparagine" evidence="3">
    <location>
        <position position="258"/>
    </location>
</feature>
<feature type="sequence conflict" description="In Ref. 6; AK107493." evidence="6" ref="6">
    <original>P</original>
    <variation>T</variation>
    <location>
        <position position="39"/>
    </location>
</feature>
<name>STLP1_ORYSJ</name>
<gene>
    <name evidence="5" type="primary">STLP1</name>
    <name evidence="9" type="ordered locus">Os01g0858900</name>
    <name evidence="6" type="ordered locus">LOC_Os01g63970</name>
    <name evidence="10" type="ORF">OsJ_04139</name>
    <name evidence="8" type="ORF">P0489B03.1</name>
    <name evidence="7" type="ORF">P0683F02.29</name>
</gene>
<protein>
    <recommendedName>
        <fullName evidence="5">Sialyltransferase-like protein 1</fullName>
        <shortName evidence="5">OsSTLP1</shortName>
        <ecNumber evidence="6">2.4.99.-</ecNumber>
    </recommendedName>
</protein>
<reference key="1">
    <citation type="journal article" date="2002" name="Nature">
        <title>The genome sequence and structure of rice chromosome 1.</title>
        <authorList>
            <person name="Sasaki T."/>
            <person name="Matsumoto T."/>
            <person name="Yamamoto K."/>
            <person name="Sakata K."/>
            <person name="Baba T."/>
            <person name="Katayose Y."/>
            <person name="Wu J."/>
            <person name="Niimura Y."/>
            <person name="Cheng Z."/>
            <person name="Nagamura Y."/>
            <person name="Antonio B.A."/>
            <person name="Kanamori H."/>
            <person name="Hosokawa S."/>
            <person name="Masukawa M."/>
            <person name="Arikawa K."/>
            <person name="Chiden Y."/>
            <person name="Hayashi M."/>
            <person name="Okamoto M."/>
            <person name="Ando T."/>
            <person name="Aoki H."/>
            <person name="Arita K."/>
            <person name="Hamada M."/>
            <person name="Harada C."/>
            <person name="Hijishita S."/>
            <person name="Honda M."/>
            <person name="Ichikawa Y."/>
            <person name="Idonuma A."/>
            <person name="Iijima M."/>
            <person name="Ikeda M."/>
            <person name="Ikeno M."/>
            <person name="Ito S."/>
            <person name="Ito T."/>
            <person name="Ito Y."/>
            <person name="Ito Y."/>
            <person name="Iwabuchi A."/>
            <person name="Kamiya K."/>
            <person name="Karasawa W."/>
            <person name="Katagiri S."/>
            <person name="Kikuta A."/>
            <person name="Kobayashi N."/>
            <person name="Kono I."/>
            <person name="Machita K."/>
            <person name="Maehara T."/>
            <person name="Mizuno H."/>
            <person name="Mizubayashi T."/>
            <person name="Mukai Y."/>
            <person name="Nagasaki H."/>
            <person name="Nakashima M."/>
            <person name="Nakama Y."/>
            <person name="Nakamichi Y."/>
            <person name="Nakamura M."/>
            <person name="Namiki N."/>
            <person name="Negishi M."/>
            <person name="Ohta I."/>
            <person name="Ono N."/>
            <person name="Saji S."/>
            <person name="Sakai K."/>
            <person name="Shibata M."/>
            <person name="Shimokawa T."/>
            <person name="Shomura A."/>
            <person name="Song J."/>
            <person name="Takazaki Y."/>
            <person name="Terasawa K."/>
            <person name="Tsuji K."/>
            <person name="Waki K."/>
            <person name="Yamagata H."/>
            <person name="Yamane H."/>
            <person name="Yoshiki S."/>
            <person name="Yoshihara R."/>
            <person name="Yukawa K."/>
            <person name="Zhong H."/>
            <person name="Iwama H."/>
            <person name="Endo T."/>
            <person name="Ito H."/>
            <person name="Hahn J.H."/>
            <person name="Kim H.-I."/>
            <person name="Eun M.-Y."/>
            <person name="Yano M."/>
            <person name="Jiang J."/>
            <person name="Gojobori T."/>
        </authorList>
    </citation>
    <scope>NUCLEOTIDE SEQUENCE [LARGE SCALE GENOMIC DNA]</scope>
    <source>
        <strain>cv. Nipponbare</strain>
    </source>
</reference>
<reference key="2">
    <citation type="journal article" date="2005" name="Nature">
        <title>The map-based sequence of the rice genome.</title>
        <authorList>
            <consortium name="International rice genome sequencing project (IRGSP)"/>
        </authorList>
    </citation>
    <scope>NUCLEOTIDE SEQUENCE [LARGE SCALE GENOMIC DNA]</scope>
    <source>
        <strain>cv. Nipponbare</strain>
    </source>
</reference>
<reference key="3">
    <citation type="journal article" date="2008" name="Nucleic Acids Res.">
        <title>The rice annotation project database (RAP-DB): 2008 update.</title>
        <authorList>
            <consortium name="The rice annotation project (RAP)"/>
        </authorList>
    </citation>
    <scope>GENOME REANNOTATION</scope>
    <source>
        <strain>cv. Nipponbare</strain>
    </source>
</reference>
<reference key="4">
    <citation type="journal article" date="2013" name="Rice">
        <title>Improvement of the Oryza sativa Nipponbare reference genome using next generation sequence and optical map data.</title>
        <authorList>
            <person name="Kawahara Y."/>
            <person name="de la Bastide M."/>
            <person name="Hamilton J.P."/>
            <person name="Kanamori H."/>
            <person name="McCombie W.R."/>
            <person name="Ouyang S."/>
            <person name="Schwartz D.C."/>
            <person name="Tanaka T."/>
            <person name="Wu J."/>
            <person name="Zhou S."/>
            <person name="Childs K.L."/>
            <person name="Davidson R.M."/>
            <person name="Lin H."/>
            <person name="Quesada-Ocampo L."/>
            <person name="Vaillancourt B."/>
            <person name="Sakai H."/>
            <person name="Lee S.S."/>
            <person name="Kim J."/>
            <person name="Numa H."/>
            <person name="Itoh T."/>
            <person name="Buell C.R."/>
            <person name="Matsumoto T."/>
        </authorList>
    </citation>
    <scope>GENOME REANNOTATION</scope>
    <source>
        <strain>cv. Nipponbare</strain>
    </source>
</reference>
<reference key="5">
    <citation type="journal article" date="2005" name="PLoS Biol.">
        <title>The genomes of Oryza sativa: a history of duplications.</title>
        <authorList>
            <person name="Yu J."/>
            <person name="Wang J."/>
            <person name="Lin W."/>
            <person name="Li S."/>
            <person name="Li H."/>
            <person name="Zhou J."/>
            <person name="Ni P."/>
            <person name="Dong W."/>
            <person name="Hu S."/>
            <person name="Zeng C."/>
            <person name="Zhang J."/>
            <person name="Zhang Y."/>
            <person name="Li R."/>
            <person name="Xu Z."/>
            <person name="Li S."/>
            <person name="Li X."/>
            <person name="Zheng H."/>
            <person name="Cong L."/>
            <person name="Lin L."/>
            <person name="Yin J."/>
            <person name="Geng J."/>
            <person name="Li G."/>
            <person name="Shi J."/>
            <person name="Liu J."/>
            <person name="Lv H."/>
            <person name="Li J."/>
            <person name="Wang J."/>
            <person name="Deng Y."/>
            <person name="Ran L."/>
            <person name="Shi X."/>
            <person name="Wang X."/>
            <person name="Wu Q."/>
            <person name="Li C."/>
            <person name="Ren X."/>
            <person name="Wang J."/>
            <person name="Wang X."/>
            <person name="Li D."/>
            <person name="Liu D."/>
            <person name="Zhang X."/>
            <person name="Ji Z."/>
            <person name="Zhao W."/>
            <person name="Sun Y."/>
            <person name="Zhang Z."/>
            <person name="Bao J."/>
            <person name="Han Y."/>
            <person name="Dong L."/>
            <person name="Ji J."/>
            <person name="Chen P."/>
            <person name="Wu S."/>
            <person name="Liu J."/>
            <person name="Xiao Y."/>
            <person name="Bu D."/>
            <person name="Tan J."/>
            <person name="Yang L."/>
            <person name="Ye C."/>
            <person name="Zhang J."/>
            <person name="Xu J."/>
            <person name="Zhou Y."/>
            <person name="Yu Y."/>
            <person name="Zhang B."/>
            <person name="Zhuang S."/>
            <person name="Wei H."/>
            <person name="Liu B."/>
            <person name="Lei M."/>
            <person name="Yu H."/>
            <person name="Li Y."/>
            <person name="Xu H."/>
            <person name="Wei S."/>
            <person name="He X."/>
            <person name="Fang L."/>
            <person name="Zhang Z."/>
            <person name="Zhang Y."/>
            <person name="Huang X."/>
            <person name="Su Z."/>
            <person name="Tong W."/>
            <person name="Li J."/>
            <person name="Tong Z."/>
            <person name="Li S."/>
            <person name="Ye J."/>
            <person name="Wang L."/>
            <person name="Fang L."/>
            <person name="Lei T."/>
            <person name="Chen C.-S."/>
            <person name="Chen H.-C."/>
            <person name="Xu Z."/>
            <person name="Li H."/>
            <person name="Huang H."/>
            <person name="Zhang F."/>
            <person name="Xu H."/>
            <person name="Li N."/>
            <person name="Zhao C."/>
            <person name="Li S."/>
            <person name="Dong L."/>
            <person name="Huang Y."/>
            <person name="Li L."/>
            <person name="Xi Y."/>
            <person name="Qi Q."/>
            <person name="Li W."/>
            <person name="Zhang B."/>
            <person name="Hu W."/>
            <person name="Zhang Y."/>
            <person name="Tian X."/>
            <person name="Jiao Y."/>
            <person name="Liang X."/>
            <person name="Jin J."/>
            <person name="Gao L."/>
            <person name="Zheng W."/>
            <person name="Hao B."/>
            <person name="Liu S.-M."/>
            <person name="Wang W."/>
            <person name="Yuan L."/>
            <person name="Cao M."/>
            <person name="McDermott J."/>
            <person name="Samudrala R."/>
            <person name="Wang J."/>
            <person name="Wong G.K.-S."/>
            <person name="Yang H."/>
        </authorList>
    </citation>
    <scope>NUCLEOTIDE SEQUENCE [LARGE SCALE GENOMIC DNA]</scope>
    <source>
        <strain>cv. Nipponbare</strain>
    </source>
</reference>
<reference key="6">
    <citation type="journal article" date="2003" name="Science">
        <title>Collection, mapping, and annotation of over 28,000 cDNA clones from japonica rice.</title>
        <authorList>
            <consortium name="The rice full-length cDNA consortium"/>
        </authorList>
    </citation>
    <scope>NUCLEOTIDE SEQUENCE [LARGE SCALE MRNA]</scope>
    <source>
        <strain>cv. Nipponbare</strain>
    </source>
</reference>
<reference key="7">
    <citation type="journal article" date="2006" name="J. Biochem.">
        <title>Analysis of sialyltransferase-like proteins from Oryza sativa.</title>
        <authorList>
            <person name="Takashima S."/>
            <person name="Abe T."/>
            <person name="Yoshida S."/>
            <person name="Kawahigashi H."/>
            <person name="Saito T."/>
            <person name="Tsuji S."/>
            <person name="Tsujimoto M."/>
        </authorList>
    </citation>
    <scope>FUNCTION</scope>
    <scope>TISSUE SPECIFICITY</scope>
</reference>
<organism>
    <name type="scientific">Oryza sativa subsp. japonica</name>
    <name type="common">Rice</name>
    <dbReference type="NCBI Taxonomy" id="39947"/>
    <lineage>
        <taxon>Eukaryota</taxon>
        <taxon>Viridiplantae</taxon>
        <taxon>Streptophyta</taxon>
        <taxon>Embryophyta</taxon>
        <taxon>Tracheophyta</taxon>
        <taxon>Spermatophyta</taxon>
        <taxon>Magnoliopsida</taxon>
        <taxon>Liliopsida</taxon>
        <taxon>Poales</taxon>
        <taxon>Poaceae</taxon>
        <taxon>BOP clade</taxon>
        <taxon>Oryzoideae</taxon>
        <taxon>Oryzeae</taxon>
        <taxon>Oryzinae</taxon>
        <taxon>Oryza</taxon>
        <taxon>Oryza sativa</taxon>
    </lineage>
</organism>